<evidence type="ECO:0000255" key="1">
    <source>
        <dbReference type="HAMAP-Rule" id="MF_01006"/>
    </source>
</evidence>
<reference key="1">
    <citation type="submission" date="2008-01" db="EMBL/GenBank/DDBJ databases">
        <title>Complete sequence of Thermoanaerobacter sp. X514.</title>
        <authorList>
            <consortium name="US DOE Joint Genome Institute"/>
            <person name="Copeland A."/>
            <person name="Lucas S."/>
            <person name="Lapidus A."/>
            <person name="Barry K."/>
            <person name="Glavina del Rio T."/>
            <person name="Dalin E."/>
            <person name="Tice H."/>
            <person name="Pitluck S."/>
            <person name="Bruce D."/>
            <person name="Goodwin L."/>
            <person name="Saunders E."/>
            <person name="Brettin T."/>
            <person name="Detter J.C."/>
            <person name="Han C."/>
            <person name="Schmutz J."/>
            <person name="Larimer F."/>
            <person name="Land M."/>
            <person name="Hauser L."/>
            <person name="Kyrpides N."/>
            <person name="Kim E."/>
            <person name="Hemme C."/>
            <person name="Fields M.W."/>
            <person name="He Z."/>
            <person name="Zhou J."/>
            <person name="Richardson P."/>
        </authorList>
    </citation>
    <scope>NUCLEOTIDE SEQUENCE [LARGE SCALE GENOMIC DNA]</scope>
    <source>
        <strain>X514</strain>
    </source>
</reference>
<dbReference type="EC" id="3.6.1.27" evidence="1"/>
<dbReference type="EMBL" id="CP000923">
    <property type="protein sequence ID" value="ABY92697.1"/>
    <property type="molecule type" value="Genomic_DNA"/>
</dbReference>
<dbReference type="RefSeq" id="WP_009052277.1">
    <property type="nucleotide sequence ID" value="NC_010320.1"/>
</dbReference>
<dbReference type="SMR" id="B0K0H2"/>
<dbReference type="KEGG" id="tex:Teth514_1408"/>
<dbReference type="HOGENOM" id="CLU_060296_2_0_9"/>
<dbReference type="Proteomes" id="UP000002155">
    <property type="component" value="Chromosome"/>
</dbReference>
<dbReference type="GO" id="GO:0005886">
    <property type="term" value="C:plasma membrane"/>
    <property type="evidence" value="ECO:0007669"/>
    <property type="project" value="UniProtKB-SubCell"/>
</dbReference>
<dbReference type="GO" id="GO:0050380">
    <property type="term" value="F:undecaprenyl-diphosphatase activity"/>
    <property type="evidence" value="ECO:0007669"/>
    <property type="project" value="UniProtKB-UniRule"/>
</dbReference>
<dbReference type="GO" id="GO:0071555">
    <property type="term" value="P:cell wall organization"/>
    <property type="evidence" value="ECO:0007669"/>
    <property type="project" value="UniProtKB-KW"/>
</dbReference>
<dbReference type="GO" id="GO:0009252">
    <property type="term" value="P:peptidoglycan biosynthetic process"/>
    <property type="evidence" value="ECO:0007669"/>
    <property type="project" value="UniProtKB-KW"/>
</dbReference>
<dbReference type="GO" id="GO:0008360">
    <property type="term" value="P:regulation of cell shape"/>
    <property type="evidence" value="ECO:0007669"/>
    <property type="project" value="UniProtKB-KW"/>
</dbReference>
<dbReference type="GO" id="GO:0046677">
    <property type="term" value="P:response to antibiotic"/>
    <property type="evidence" value="ECO:0007669"/>
    <property type="project" value="UniProtKB-UniRule"/>
</dbReference>
<dbReference type="HAMAP" id="MF_01006">
    <property type="entry name" value="Undec_diphosphatase"/>
    <property type="match status" value="1"/>
</dbReference>
<dbReference type="InterPro" id="IPR003824">
    <property type="entry name" value="UppP"/>
</dbReference>
<dbReference type="NCBIfam" id="NF001389">
    <property type="entry name" value="PRK00281.1-2"/>
    <property type="match status" value="1"/>
</dbReference>
<dbReference type="NCBIfam" id="NF001390">
    <property type="entry name" value="PRK00281.1-4"/>
    <property type="match status" value="1"/>
</dbReference>
<dbReference type="NCBIfam" id="TIGR00753">
    <property type="entry name" value="undec_PP_bacA"/>
    <property type="match status" value="1"/>
</dbReference>
<dbReference type="PANTHER" id="PTHR30622">
    <property type="entry name" value="UNDECAPRENYL-DIPHOSPHATASE"/>
    <property type="match status" value="1"/>
</dbReference>
<dbReference type="PANTHER" id="PTHR30622:SF3">
    <property type="entry name" value="UNDECAPRENYL-DIPHOSPHATASE"/>
    <property type="match status" value="1"/>
</dbReference>
<dbReference type="Pfam" id="PF02673">
    <property type="entry name" value="BacA"/>
    <property type="match status" value="1"/>
</dbReference>
<comment type="function">
    <text evidence="1">Catalyzes the dephosphorylation of undecaprenyl diphosphate (UPP). Confers resistance to bacitracin.</text>
</comment>
<comment type="catalytic activity">
    <reaction evidence="1">
        <text>di-trans,octa-cis-undecaprenyl diphosphate + H2O = di-trans,octa-cis-undecaprenyl phosphate + phosphate + H(+)</text>
        <dbReference type="Rhea" id="RHEA:28094"/>
        <dbReference type="ChEBI" id="CHEBI:15377"/>
        <dbReference type="ChEBI" id="CHEBI:15378"/>
        <dbReference type="ChEBI" id="CHEBI:43474"/>
        <dbReference type="ChEBI" id="CHEBI:58405"/>
        <dbReference type="ChEBI" id="CHEBI:60392"/>
        <dbReference type="EC" id="3.6.1.27"/>
    </reaction>
</comment>
<comment type="subcellular location">
    <subcellularLocation>
        <location evidence="1">Cell membrane</location>
        <topology evidence="1">Multi-pass membrane protein</topology>
    </subcellularLocation>
</comment>
<comment type="miscellaneous">
    <text>Bacitracin is thought to be involved in the inhibition of peptidoglycan synthesis by sequestering undecaprenyl diphosphate, thereby reducing the pool of lipid carrier available.</text>
</comment>
<comment type="similarity">
    <text evidence="1">Belongs to the UppP family.</text>
</comment>
<sequence>MELLIKAFIMGIVEGLTEFLPISSTGHLIIVGKFIHFTGNFATMFEIVIQLGAILAVVFYYRKKIFASLKNLKPGSWGFNLWFKIFIAFIPAAVIGLLTHKYIEEHLFSPFTVAIALIAGAIMMIVIEDTFGKRYKIDNMDKVDTKKSLLIGIAQVMSLFPGMSRSASTIMGGMLAGLSVKAAAEFSFFLAIPTMFAATTLSLLKGFSAMSLLEWQALAVGFITSFLTALFVVDKFLPYLTRHSLKPFAYYRLAVGVLMILLVAEKIVK</sequence>
<gene>
    <name evidence="1" type="primary">uppP</name>
    <name type="ordered locus">Teth514_1408</name>
</gene>
<name>UPPP_THEPX</name>
<protein>
    <recommendedName>
        <fullName evidence="1">Undecaprenyl-diphosphatase</fullName>
        <ecNumber evidence="1">3.6.1.27</ecNumber>
    </recommendedName>
    <alternativeName>
        <fullName evidence="1">Bacitracin resistance protein</fullName>
    </alternativeName>
    <alternativeName>
        <fullName evidence="1">Undecaprenyl pyrophosphate phosphatase</fullName>
    </alternativeName>
</protein>
<proteinExistence type="inferred from homology"/>
<keyword id="KW-0046">Antibiotic resistance</keyword>
<keyword id="KW-1003">Cell membrane</keyword>
<keyword id="KW-0133">Cell shape</keyword>
<keyword id="KW-0961">Cell wall biogenesis/degradation</keyword>
<keyword id="KW-0378">Hydrolase</keyword>
<keyword id="KW-0472">Membrane</keyword>
<keyword id="KW-0573">Peptidoglycan synthesis</keyword>
<keyword id="KW-0812">Transmembrane</keyword>
<keyword id="KW-1133">Transmembrane helix</keyword>
<feature type="chain" id="PRO_1000148834" description="Undecaprenyl-diphosphatase">
    <location>
        <begin position="1"/>
        <end position="269"/>
    </location>
</feature>
<feature type="transmembrane region" description="Helical" evidence="1">
    <location>
        <begin position="3"/>
        <end position="23"/>
    </location>
</feature>
<feature type="transmembrane region" description="Helical" evidence="1">
    <location>
        <begin position="41"/>
        <end position="61"/>
    </location>
</feature>
<feature type="transmembrane region" description="Helical" evidence="1">
    <location>
        <begin position="78"/>
        <end position="98"/>
    </location>
</feature>
<feature type="transmembrane region" description="Helical" evidence="1">
    <location>
        <begin position="107"/>
        <end position="127"/>
    </location>
</feature>
<feature type="transmembrane region" description="Helical" evidence="1">
    <location>
        <begin position="148"/>
        <end position="167"/>
    </location>
</feature>
<feature type="transmembrane region" description="Helical" evidence="1">
    <location>
        <begin position="184"/>
        <end position="204"/>
    </location>
</feature>
<feature type="transmembrane region" description="Helical" evidence="1">
    <location>
        <begin position="213"/>
        <end position="233"/>
    </location>
</feature>
<feature type="transmembrane region" description="Helical" evidence="1">
    <location>
        <begin position="248"/>
        <end position="268"/>
    </location>
</feature>
<organism>
    <name type="scientific">Thermoanaerobacter sp. (strain X514)</name>
    <dbReference type="NCBI Taxonomy" id="399726"/>
    <lineage>
        <taxon>Bacteria</taxon>
        <taxon>Bacillati</taxon>
        <taxon>Bacillota</taxon>
        <taxon>Clostridia</taxon>
        <taxon>Thermoanaerobacterales</taxon>
        <taxon>Thermoanaerobacteraceae</taxon>
        <taxon>Thermoanaerobacter</taxon>
    </lineage>
</organism>
<accession>B0K0H2</accession>